<reference key="1">
    <citation type="journal article" date="2009" name="Proc. Natl. Acad. Sci. U.S.A.">
        <title>Characterizing a model human gut microbiota composed of members of its two dominant bacterial phyla.</title>
        <authorList>
            <person name="Mahowald M.A."/>
            <person name="Rey F.E."/>
            <person name="Seedorf H."/>
            <person name="Turnbaugh P.J."/>
            <person name="Fulton R.S."/>
            <person name="Wollam A."/>
            <person name="Shah N."/>
            <person name="Wang C."/>
            <person name="Magrini V."/>
            <person name="Wilson R.K."/>
            <person name="Cantarel B.L."/>
            <person name="Coutinho P.M."/>
            <person name="Henrissat B."/>
            <person name="Crock L.W."/>
            <person name="Russell A."/>
            <person name="Verberkmoes N.C."/>
            <person name="Hettich R.L."/>
            <person name="Gordon J.I."/>
        </authorList>
    </citation>
    <scope>NUCLEOTIDE SEQUENCE [LARGE SCALE GENOMIC DNA]</scope>
    <source>
        <strain>ATCC 27750 / DSM 3376 / VPI C15-48 / C15-B4</strain>
    </source>
</reference>
<comment type="function">
    <text evidence="1">Catalyzes the formation of 4-diphosphocytidyl-2-C-methyl-D-erythritol from CTP and 2-C-methyl-D-erythritol 4-phosphate (MEP).</text>
</comment>
<comment type="catalytic activity">
    <reaction evidence="1">
        <text>2-C-methyl-D-erythritol 4-phosphate + CTP + H(+) = 4-CDP-2-C-methyl-D-erythritol + diphosphate</text>
        <dbReference type="Rhea" id="RHEA:13429"/>
        <dbReference type="ChEBI" id="CHEBI:15378"/>
        <dbReference type="ChEBI" id="CHEBI:33019"/>
        <dbReference type="ChEBI" id="CHEBI:37563"/>
        <dbReference type="ChEBI" id="CHEBI:57823"/>
        <dbReference type="ChEBI" id="CHEBI:58262"/>
        <dbReference type="EC" id="2.7.7.60"/>
    </reaction>
</comment>
<comment type="pathway">
    <text evidence="1">Isoprenoid biosynthesis; isopentenyl diphosphate biosynthesis via DXP pathway; isopentenyl diphosphate from 1-deoxy-D-xylulose 5-phosphate: step 2/6.</text>
</comment>
<comment type="similarity">
    <text evidence="1">Belongs to the IspD/TarI cytidylyltransferase family. IspD subfamily.</text>
</comment>
<organism>
    <name type="scientific">Lachnospira eligens (strain ATCC 27750 / DSM 3376 / VPI C15-48 / C15-B4)</name>
    <name type="common">Eubacterium eligens</name>
    <dbReference type="NCBI Taxonomy" id="515620"/>
    <lineage>
        <taxon>Bacteria</taxon>
        <taxon>Bacillati</taxon>
        <taxon>Bacillota</taxon>
        <taxon>Clostridia</taxon>
        <taxon>Lachnospirales</taxon>
        <taxon>Lachnospiraceae</taxon>
        <taxon>Lachnospira</taxon>
    </lineage>
</organism>
<evidence type="ECO:0000255" key="1">
    <source>
        <dbReference type="HAMAP-Rule" id="MF_00108"/>
    </source>
</evidence>
<sequence length="227" mass="25421">MNTAIVLAGGSGKRMHSEIPKQYMQLNGKPVIYYSLKAFEESEHVDEIILVTAKEYIEYVRNEIAGSQFAKLTKIIEGGKERFDSVWAGLQQISEKGYVYIHDGARPCINQNIINACWETVVQTDACVAAAPVKDTIKVADADEYAINTPDRKTLWQIQTPQVFSADVIKEAYSRLYEQNCFDGVTDDAMVVERYGNSKIKLVNCGYCNIKITTPEDMEIAGIFLKG</sequence>
<accession>C4Z312</accession>
<name>ISPD_LACE2</name>
<gene>
    <name evidence="1" type="primary">ispD</name>
    <name type="ordered locus">EUBELI_00381</name>
</gene>
<keyword id="KW-0414">Isoprene biosynthesis</keyword>
<keyword id="KW-0548">Nucleotidyltransferase</keyword>
<keyword id="KW-1185">Reference proteome</keyword>
<keyword id="KW-0808">Transferase</keyword>
<feature type="chain" id="PRO_1000202892" description="2-C-methyl-D-erythritol 4-phosphate cytidylyltransferase">
    <location>
        <begin position="1"/>
        <end position="227"/>
    </location>
</feature>
<feature type="site" description="Transition state stabilizer" evidence="1">
    <location>
        <position position="14"/>
    </location>
</feature>
<feature type="site" description="Transition state stabilizer" evidence="1">
    <location>
        <position position="21"/>
    </location>
</feature>
<feature type="site" description="Positions MEP for the nucleophilic attack" evidence="1">
    <location>
        <position position="152"/>
    </location>
</feature>
<feature type="site" description="Positions MEP for the nucleophilic attack" evidence="1">
    <location>
        <position position="211"/>
    </location>
</feature>
<dbReference type="EC" id="2.7.7.60" evidence="1"/>
<dbReference type="EMBL" id="CP001104">
    <property type="protein sequence ID" value="ACR71417.1"/>
    <property type="molecule type" value="Genomic_DNA"/>
</dbReference>
<dbReference type="RefSeq" id="WP_012738654.1">
    <property type="nucleotide sequence ID" value="NC_012778.1"/>
</dbReference>
<dbReference type="SMR" id="C4Z312"/>
<dbReference type="STRING" id="515620.EUBELI_00381"/>
<dbReference type="GeneID" id="41355152"/>
<dbReference type="KEGG" id="eel:EUBELI_00381"/>
<dbReference type="eggNOG" id="COG1211">
    <property type="taxonomic scope" value="Bacteria"/>
</dbReference>
<dbReference type="HOGENOM" id="CLU_061281_2_2_9"/>
<dbReference type="UniPathway" id="UPA00056">
    <property type="reaction ID" value="UER00093"/>
</dbReference>
<dbReference type="Proteomes" id="UP000001476">
    <property type="component" value="Chromosome"/>
</dbReference>
<dbReference type="GO" id="GO:0050518">
    <property type="term" value="F:2-C-methyl-D-erythritol 4-phosphate cytidylyltransferase activity"/>
    <property type="evidence" value="ECO:0007669"/>
    <property type="project" value="UniProtKB-UniRule"/>
</dbReference>
<dbReference type="GO" id="GO:0019288">
    <property type="term" value="P:isopentenyl diphosphate biosynthetic process, methylerythritol 4-phosphate pathway"/>
    <property type="evidence" value="ECO:0007669"/>
    <property type="project" value="UniProtKB-UniRule"/>
</dbReference>
<dbReference type="CDD" id="cd02516">
    <property type="entry name" value="CDP-ME_synthetase"/>
    <property type="match status" value="1"/>
</dbReference>
<dbReference type="FunFam" id="3.90.550.10:FF:000003">
    <property type="entry name" value="2-C-methyl-D-erythritol 4-phosphate cytidylyltransferase"/>
    <property type="match status" value="1"/>
</dbReference>
<dbReference type="Gene3D" id="3.90.550.10">
    <property type="entry name" value="Spore Coat Polysaccharide Biosynthesis Protein SpsA, Chain A"/>
    <property type="match status" value="1"/>
</dbReference>
<dbReference type="HAMAP" id="MF_00108">
    <property type="entry name" value="IspD"/>
    <property type="match status" value="1"/>
</dbReference>
<dbReference type="InterPro" id="IPR001228">
    <property type="entry name" value="IspD"/>
</dbReference>
<dbReference type="InterPro" id="IPR034683">
    <property type="entry name" value="IspD/TarI"/>
</dbReference>
<dbReference type="InterPro" id="IPR050088">
    <property type="entry name" value="IspD/TarI_cytidylyltransf_bact"/>
</dbReference>
<dbReference type="InterPro" id="IPR029044">
    <property type="entry name" value="Nucleotide-diphossugar_trans"/>
</dbReference>
<dbReference type="NCBIfam" id="TIGR00453">
    <property type="entry name" value="ispD"/>
    <property type="match status" value="1"/>
</dbReference>
<dbReference type="PANTHER" id="PTHR32125">
    <property type="entry name" value="2-C-METHYL-D-ERYTHRITOL 4-PHOSPHATE CYTIDYLYLTRANSFERASE, CHLOROPLASTIC"/>
    <property type="match status" value="1"/>
</dbReference>
<dbReference type="PANTHER" id="PTHR32125:SF4">
    <property type="entry name" value="2-C-METHYL-D-ERYTHRITOL 4-PHOSPHATE CYTIDYLYLTRANSFERASE, CHLOROPLASTIC"/>
    <property type="match status" value="1"/>
</dbReference>
<dbReference type="Pfam" id="PF01128">
    <property type="entry name" value="IspD"/>
    <property type="match status" value="1"/>
</dbReference>
<dbReference type="SUPFAM" id="SSF53448">
    <property type="entry name" value="Nucleotide-diphospho-sugar transferases"/>
    <property type="match status" value="1"/>
</dbReference>
<proteinExistence type="inferred from homology"/>
<protein>
    <recommendedName>
        <fullName evidence="1">2-C-methyl-D-erythritol 4-phosphate cytidylyltransferase</fullName>
        <ecNumber evidence="1">2.7.7.60</ecNumber>
    </recommendedName>
    <alternativeName>
        <fullName evidence="1">4-diphosphocytidyl-2C-methyl-D-erythritol synthase</fullName>
    </alternativeName>
    <alternativeName>
        <fullName evidence="1">MEP cytidylyltransferase</fullName>
        <shortName evidence="1">MCT</shortName>
    </alternativeName>
</protein>